<feature type="chain" id="PRO_1000117234" description="Peptide chain release factor 1">
    <location>
        <begin position="1"/>
        <end position="355"/>
    </location>
</feature>
<feature type="region of interest" description="Disordered" evidence="2">
    <location>
        <begin position="282"/>
        <end position="309"/>
    </location>
</feature>
<feature type="compositionally biased region" description="Basic and acidic residues" evidence="2">
    <location>
        <begin position="289"/>
        <end position="305"/>
    </location>
</feature>
<feature type="modified residue" description="N5-methylglutamine" evidence="1">
    <location>
        <position position="232"/>
    </location>
</feature>
<reference key="1">
    <citation type="journal article" date="2012" name="Environ. Microbiol.">
        <title>The genome sequence of Desulfatibacillum alkenivorans AK-01: a blueprint for anaerobic alkane oxidation.</title>
        <authorList>
            <person name="Callaghan A.V."/>
            <person name="Morris B.E."/>
            <person name="Pereira I.A."/>
            <person name="McInerney M.J."/>
            <person name="Austin R.N."/>
            <person name="Groves J.T."/>
            <person name="Kukor J.J."/>
            <person name="Suflita J.M."/>
            <person name="Young L.Y."/>
            <person name="Zylstra G.J."/>
            <person name="Wawrik B."/>
        </authorList>
    </citation>
    <scope>NUCLEOTIDE SEQUENCE [LARGE SCALE GENOMIC DNA]</scope>
    <source>
        <strain>AK-01</strain>
    </source>
</reference>
<accession>B8FEA2</accession>
<keyword id="KW-0963">Cytoplasm</keyword>
<keyword id="KW-0488">Methylation</keyword>
<keyword id="KW-0648">Protein biosynthesis</keyword>
<keyword id="KW-1185">Reference proteome</keyword>
<evidence type="ECO:0000255" key="1">
    <source>
        <dbReference type="HAMAP-Rule" id="MF_00093"/>
    </source>
</evidence>
<evidence type="ECO:0000256" key="2">
    <source>
        <dbReference type="SAM" id="MobiDB-lite"/>
    </source>
</evidence>
<sequence>MLDRLEGVEQRFLEVESLLSDPKIVGDQKVYQKYVREHADLSKVVEAYREYKQVLEGLEESKELLKDPDPDIKDLAKEEIDRLDKEQVRLEDELKILLLPKDPNDDKNVILEIRAGTGGDEAGLFAADLFRMYSRYAETRGWKVETLSEHLTGVGGIKEIAAMITGQGVYSAFKFESGTHRVQRVPVTEAQGRIHTSACTVAVLPEAEEVDIQIDPSEIRVDVYRSQGAGGQHVNTTDSAVRLTHLPTGVVVTCQDEKSQHKNKAKAMKVLRARLLDHAVQEQNASISAERKSQVGSGDRSERIRTYNYPQGRVTDHRIGLTLYKLESIMAGQISEIVDALTTHYNAEALQEGGL</sequence>
<proteinExistence type="inferred from homology"/>
<protein>
    <recommendedName>
        <fullName evidence="1">Peptide chain release factor 1</fullName>
        <shortName evidence="1">RF-1</shortName>
    </recommendedName>
</protein>
<dbReference type="EMBL" id="CP001322">
    <property type="protein sequence ID" value="ACL06883.1"/>
    <property type="molecule type" value="Genomic_DNA"/>
</dbReference>
<dbReference type="RefSeq" id="WP_015949919.1">
    <property type="nucleotide sequence ID" value="NC_011768.1"/>
</dbReference>
<dbReference type="SMR" id="B8FEA2"/>
<dbReference type="KEGG" id="dal:Dalk_5213"/>
<dbReference type="eggNOG" id="COG0216">
    <property type="taxonomic scope" value="Bacteria"/>
</dbReference>
<dbReference type="HOGENOM" id="CLU_036856_0_1_7"/>
<dbReference type="Proteomes" id="UP000000739">
    <property type="component" value="Chromosome"/>
</dbReference>
<dbReference type="GO" id="GO:0005737">
    <property type="term" value="C:cytoplasm"/>
    <property type="evidence" value="ECO:0007669"/>
    <property type="project" value="UniProtKB-SubCell"/>
</dbReference>
<dbReference type="GO" id="GO:0016149">
    <property type="term" value="F:translation release factor activity, codon specific"/>
    <property type="evidence" value="ECO:0007669"/>
    <property type="project" value="UniProtKB-UniRule"/>
</dbReference>
<dbReference type="FunFam" id="3.30.160.20:FF:000004">
    <property type="entry name" value="Peptide chain release factor 1"/>
    <property type="match status" value="1"/>
</dbReference>
<dbReference type="FunFam" id="3.30.70.1660:FF:000002">
    <property type="entry name" value="Peptide chain release factor 1"/>
    <property type="match status" value="1"/>
</dbReference>
<dbReference type="FunFam" id="3.30.70.1660:FF:000004">
    <property type="entry name" value="Peptide chain release factor 1"/>
    <property type="match status" value="1"/>
</dbReference>
<dbReference type="Gene3D" id="3.30.160.20">
    <property type="match status" value="1"/>
</dbReference>
<dbReference type="Gene3D" id="3.30.70.1660">
    <property type="match status" value="2"/>
</dbReference>
<dbReference type="Gene3D" id="6.10.140.1950">
    <property type="match status" value="1"/>
</dbReference>
<dbReference type="HAMAP" id="MF_00093">
    <property type="entry name" value="Rel_fac_1"/>
    <property type="match status" value="1"/>
</dbReference>
<dbReference type="InterPro" id="IPR005139">
    <property type="entry name" value="PCRF"/>
</dbReference>
<dbReference type="InterPro" id="IPR000352">
    <property type="entry name" value="Pep_chain_release_fac_I"/>
</dbReference>
<dbReference type="InterPro" id="IPR045853">
    <property type="entry name" value="Pep_chain_release_fac_I_sf"/>
</dbReference>
<dbReference type="InterPro" id="IPR050057">
    <property type="entry name" value="Prokaryotic/Mito_RF"/>
</dbReference>
<dbReference type="InterPro" id="IPR004373">
    <property type="entry name" value="RF-1"/>
</dbReference>
<dbReference type="NCBIfam" id="TIGR00019">
    <property type="entry name" value="prfA"/>
    <property type="match status" value="1"/>
</dbReference>
<dbReference type="NCBIfam" id="NF001859">
    <property type="entry name" value="PRK00591.1"/>
    <property type="match status" value="1"/>
</dbReference>
<dbReference type="PANTHER" id="PTHR43804">
    <property type="entry name" value="LD18447P"/>
    <property type="match status" value="1"/>
</dbReference>
<dbReference type="PANTHER" id="PTHR43804:SF7">
    <property type="entry name" value="LD18447P"/>
    <property type="match status" value="1"/>
</dbReference>
<dbReference type="Pfam" id="PF03462">
    <property type="entry name" value="PCRF"/>
    <property type="match status" value="1"/>
</dbReference>
<dbReference type="Pfam" id="PF00472">
    <property type="entry name" value="RF-1"/>
    <property type="match status" value="1"/>
</dbReference>
<dbReference type="SMART" id="SM00937">
    <property type="entry name" value="PCRF"/>
    <property type="match status" value="1"/>
</dbReference>
<dbReference type="SUPFAM" id="SSF75620">
    <property type="entry name" value="Release factor"/>
    <property type="match status" value="1"/>
</dbReference>
<dbReference type="PROSITE" id="PS00745">
    <property type="entry name" value="RF_PROK_I"/>
    <property type="match status" value="1"/>
</dbReference>
<organism>
    <name type="scientific">Desulfatibacillum aliphaticivorans</name>
    <dbReference type="NCBI Taxonomy" id="218208"/>
    <lineage>
        <taxon>Bacteria</taxon>
        <taxon>Pseudomonadati</taxon>
        <taxon>Thermodesulfobacteriota</taxon>
        <taxon>Desulfobacteria</taxon>
        <taxon>Desulfobacterales</taxon>
        <taxon>Desulfatibacillaceae</taxon>
        <taxon>Desulfatibacillum</taxon>
    </lineage>
</organism>
<comment type="function">
    <text evidence="1">Peptide chain release factor 1 directs the termination of translation in response to the peptide chain termination codons UAG and UAA.</text>
</comment>
<comment type="subcellular location">
    <subcellularLocation>
        <location evidence="1">Cytoplasm</location>
    </subcellularLocation>
</comment>
<comment type="PTM">
    <text evidence="1">Methylated by PrmC. Methylation increases the termination efficiency of RF1.</text>
</comment>
<comment type="similarity">
    <text evidence="1">Belongs to the prokaryotic/mitochondrial release factor family.</text>
</comment>
<name>RF1_DESAL</name>
<gene>
    <name evidence="1" type="primary">prfA</name>
    <name type="ordered locus">Dalk_5213</name>
</gene>